<proteinExistence type="evidence at protein level"/>
<protein>
    <recommendedName>
        <fullName>Defensin-like protein 13</fullName>
    </recommendedName>
    <alternativeName>
        <fullName>Anther-specific protein S18 homolog</fullName>
    </alternativeName>
    <alternativeName>
        <fullName>Cysteine-rich antifungal protein 1</fullName>
        <shortName>AFP1</shortName>
    </alternativeName>
    <alternativeName>
        <fullName>Low-molecular-weight cysteine-rich protein 67</fullName>
        <shortName>Protein LCR67</shortName>
    </alternativeName>
    <alternativeName>
        <fullName>Plant defensin 1.1</fullName>
    </alternativeName>
</protein>
<accession>P30224</accession>
<accession>Q42179</accession>
<organism>
    <name type="scientific">Arabidopsis thaliana</name>
    <name type="common">Mouse-ear cress</name>
    <dbReference type="NCBI Taxonomy" id="3702"/>
    <lineage>
        <taxon>Eukaryota</taxon>
        <taxon>Viridiplantae</taxon>
        <taxon>Streptophyta</taxon>
        <taxon>Embryophyta</taxon>
        <taxon>Tracheophyta</taxon>
        <taxon>Spermatophyta</taxon>
        <taxon>Magnoliopsida</taxon>
        <taxon>eudicotyledons</taxon>
        <taxon>Gunneridae</taxon>
        <taxon>Pentapetalae</taxon>
        <taxon>rosids</taxon>
        <taxon>malvids</taxon>
        <taxon>Brassicales</taxon>
        <taxon>Brassicaceae</taxon>
        <taxon>Camelineae</taxon>
        <taxon>Arabidopsis</taxon>
    </lineage>
</organism>
<keyword id="KW-0929">Antimicrobial</keyword>
<keyword id="KW-0903">Direct protein sequencing</keyword>
<keyword id="KW-1015">Disulfide bond</keyword>
<keyword id="KW-0295">Fungicide</keyword>
<keyword id="KW-0611">Plant defense</keyword>
<keyword id="KW-0873">Pyrrolidone carboxylic acid</keyword>
<keyword id="KW-1185">Reference proteome</keyword>
<keyword id="KW-0964">Secreted</keyword>
<keyword id="KW-0732">Signal</keyword>
<evidence type="ECO:0000250" key="1"/>
<evidence type="ECO:0000269" key="2">
    <source>
    </source>
</evidence>
<evidence type="ECO:0000269" key="3">
    <source>
    </source>
</evidence>
<evidence type="ECO:0000269" key="4">
    <source>
    </source>
</evidence>
<evidence type="ECO:0000305" key="5"/>
<sequence length="80" mass="8709">MAKSATIVTLFFAALVFFAALEAPMVVEAQKLCERPSGTWSGVCGNSNACKNQCINLEKARHGSCNYVFPAHKCICYFPC</sequence>
<comment type="function">
    <text evidence="2 3">Confers broad-spectrum resistance to pathogens. Possesses antifungal activity sensitive to inorganic cations in vitro.</text>
</comment>
<comment type="subunit">
    <text>Forms oligomers in its native state.</text>
</comment>
<comment type="subcellular location">
    <subcellularLocation>
        <location>Secreted</location>
    </subcellularLocation>
</comment>
<comment type="tissue specificity">
    <text evidence="4">Expressed predominantly in siliques and dry seeds.</text>
</comment>
<comment type="similarity">
    <text evidence="5">Belongs to the DEFL family.</text>
</comment>
<gene>
    <name type="primary">PDF1.1</name>
    <name type="synonym">AFP1</name>
    <name type="synonym">LCR67</name>
    <name type="ordered locus">At1g75830</name>
    <name type="ORF">T4O12.7</name>
</gene>
<feature type="signal peptide" evidence="3">
    <location>
        <begin position="1"/>
        <end position="29"/>
    </location>
</feature>
<feature type="chain" id="PRO_0000007019" description="Defensin-like protein 13">
    <location>
        <begin position="30"/>
        <end position="80"/>
    </location>
</feature>
<feature type="modified residue" description="Pyrrolidone carboxylic acid" evidence="3">
    <location>
        <position position="30"/>
    </location>
</feature>
<feature type="disulfide bond" evidence="1">
    <location>
        <begin position="33"/>
        <end position="80"/>
    </location>
</feature>
<feature type="disulfide bond" evidence="1">
    <location>
        <begin position="44"/>
        <end position="65"/>
    </location>
</feature>
<feature type="disulfide bond" evidence="1">
    <location>
        <begin position="50"/>
        <end position="74"/>
    </location>
</feature>
<feature type="disulfide bond" evidence="1">
    <location>
        <begin position="54"/>
        <end position="76"/>
    </location>
</feature>
<feature type="sequence conflict" description="In Ref. 6; CAA81770." evidence="5" ref="6">
    <original>C</original>
    <variation>F</variation>
    <location>
        <position position="33"/>
    </location>
</feature>
<name>DEF13_ARATH</name>
<dbReference type="EMBL" id="AF049870">
    <property type="protein sequence ID" value="AAD02502.1"/>
    <property type="molecule type" value="Genomic_DNA"/>
</dbReference>
<dbReference type="EMBL" id="AC007396">
    <property type="protein sequence ID" value="AAF26754.1"/>
    <property type="molecule type" value="Genomic_DNA"/>
</dbReference>
<dbReference type="EMBL" id="CP002684">
    <property type="protein sequence ID" value="AEE35763.1"/>
    <property type="molecule type" value="Genomic_DNA"/>
</dbReference>
<dbReference type="EMBL" id="AY052236">
    <property type="protein sequence ID" value="AAK97706.1"/>
    <property type="molecule type" value="mRNA"/>
</dbReference>
<dbReference type="EMBL" id="AY060506">
    <property type="protein sequence ID" value="AAL31119.1"/>
    <property type="molecule type" value="mRNA"/>
</dbReference>
<dbReference type="EMBL" id="X91916">
    <property type="protein sequence ID" value="CAA63009.1"/>
    <property type="molecule type" value="mRNA"/>
</dbReference>
<dbReference type="EMBL" id="Z27258">
    <property type="protein sequence ID" value="CAA81770.1"/>
    <property type="molecule type" value="mRNA"/>
</dbReference>
<dbReference type="EMBL" id="Z29957">
    <property type="protein sequence ID" value="CAA82845.1"/>
    <property type="molecule type" value="mRNA"/>
</dbReference>
<dbReference type="PIR" id="F96787">
    <property type="entry name" value="F96787"/>
</dbReference>
<dbReference type="PIR" id="S28995">
    <property type="entry name" value="S28995"/>
</dbReference>
<dbReference type="RefSeq" id="NP_565119.1">
    <property type="nucleotide sequence ID" value="NM_106233.4"/>
</dbReference>
<dbReference type="BMRB" id="P30224"/>
<dbReference type="SMR" id="P30224"/>
<dbReference type="STRING" id="3702.P30224"/>
<dbReference type="PaxDb" id="3702-AT1G75830.1"/>
<dbReference type="ProteomicsDB" id="224665"/>
<dbReference type="EnsemblPlants" id="AT1G75830.1">
    <property type="protein sequence ID" value="AT1G75830.1"/>
    <property type="gene ID" value="AT1G75830"/>
</dbReference>
<dbReference type="GeneID" id="843916"/>
<dbReference type="Gramene" id="AT1G75830.1">
    <property type="protein sequence ID" value="AT1G75830.1"/>
    <property type="gene ID" value="AT1G75830"/>
</dbReference>
<dbReference type="KEGG" id="ath:AT1G75830"/>
<dbReference type="Araport" id="AT1G75830"/>
<dbReference type="TAIR" id="AT1G75830">
    <property type="gene designation" value="LCR67"/>
</dbReference>
<dbReference type="eggNOG" id="ENOG502SQS4">
    <property type="taxonomic scope" value="Eukaryota"/>
</dbReference>
<dbReference type="HOGENOM" id="CLU_161668_3_0_1"/>
<dbReference type="InParanoid" id="P30224"/>
<dbReference type="OMA" id="PARKCIC"/>
<dbReference type="OrthoDB" id="1851987at2759"/>
<dbReference type="PhylomeDB" id="P30224"/>
<dbReference type="PRO" id="PR:P30224"/>
<dbReference type="Proteomes" id="UP000006548">
    <property type="component" value="Chromosome 1"/>
</dbReference>
<dbReference type="ExpressionAtlas" id="P30224">
    <property type="expression patterns" value="baseline and differential"/>
</dbReference>
<dbReference type="GO" id="GO:0005576">
    <property type="term" value="C:extracellular region"/>
    <property type="evidence" value="ECO:0007669"/>
    <property type="project" value="UniProtKB-SubCell"/>
</dbReference>
<dbReference type="GO" id="GO:0006952">
    <property type="term" value="P:defense response"/>
    <property type="evidence" value="ECO:0000250"/>
    <property type="project" value="TAIR"/>
</dbReference>
<dbReference type="GO" id="GO:0050832">
    <property type="term" value="P:defense response to fungus"/>
    <property type="evidence" value="ECO:0007669"/>
    <property type="project" value="UniProtKB-KW"/>
</dbReference>
<dbReference type="GO" id="GO:0031640">
    <property type="term" value="P:killing of cells of another organism"/>
    <property type="evidence" value="ECO:0007669"/>
    <property type="project" value="UniProtKB-KW"/>
</dbReference>
<dbReference type="FunFam" id="3.30.30.10:FF:000003">
    <property type="entry name" value="Defensin-like protein 1"/>
    <property type="match status" value="1"/>
</dbReference>
<dbReference type="Gene3D" id="3.30.30.10">
    <property type="entry name" value="Knottin, scorpion toxin-like"/>
    <property type="match status" value="1"/>
</dbReference>
<dbReference type="InterPro" id="IPR008176">
    <property type="entry name" value="Defensin_plant"/>
</dbReference>
<dbReference type="InterPro" id="IPR003614">
    <property type="entry name" value="Scorpion_toxin-like"/>
</dbReference>
<dbReference type="InterPro" id="IPR036574">
    <property type="entry name" value="Scorpion_toxin-like_sf"/>
</dbReference>
<dbReference type="PANTHER" id="PTHR33147">
    <property type="entry name" value="DEFENSIN-LIKE PROTEIN 1"/>
    <property type="match status" value="1"/>
</dbReference>
<dbReference type="PANTHER" id="PTHR33147:SF101">
    <property type="entry name" value="DEFENSIN-LIKE PROTEIN 13"/>
    <property type="match status" value="1"/>
</dbReference>
<dbReference type="Pfam" id="PF00304">
    <property type="entry name" value="Gamma-thionin"/>
    <property type="match status" value="1"/>
</dbReference>
<dbReference type="SMART" id="SM00505">
    <property type="entry name" value="Knot1"/>
    <property type="match status" value="1"/>
</dbReference>
<dbReference type="SUPFAM" id="SSF57095">
    <property type="entry name" value="Scorpion toxin-like"/>
    <property type="match status" value="1"/>
</dbReference>
<dbReference type="PROSITE" id="PS00940">
    <property type="entry name" value="GAMMA_THIONIN"/>
    <property type="match status" value="1"/>
</dbReference>
<reference key="1">
    <citation type="journal article" date="1996" name="Plant Cell">
        <title>Pathogen-induced systemic activation of a plant defensin gene in Arabidopsis follows a salicylic acid-independent pathway.</title>
        <authorList>
            <person name="Penninckx I.A.M.A."/>
            <person name="Eggermont K."/>
            <person name="Terras F.R.G."/>
            <person name="Thomma B.P.H.J."/>
            <person name="De Samblanx G.W."/>
            <person name="Buchala A."/>
            <person name="Metraux J.-P."/>
            <person name="Manners J.M."/>
            <person name="Broekaert W.F."/>
        </authorList>
    </citation>
    <scope>NUCLEOTIDE SEQUENCE [MRNA]</scope>
    <scope>TISSUE SPECIFICITY</scope>
</reference>
<reference key="2">
    <citation type="journal article" date="1999" name="Plant Mol. Biol.">
        <title>Genetic and physical characterization of a region of Arabidopsis chromosome 1 containing the CLAVATA1 gene.</title>
        <authorList>
            <person name="Williams R.W."/>
            <person name="Clark S.E."/>
            <person name="Meyerowitz E.M."/>
        </authorList>
    </citation>
    <scope>NUCLEOTIDE SEQUENCE [GENOMIC DNA]</scope>
</reference>
<reference key="3">
    <citation type="journal article" date="2000" name="Nature">
        <title>Sequence and analysis of chromosome 1 of the plant Arabidopsis thaliana.</title>
        <authorList>
            <person name="Theologis A."/>
            <person name="Ecker J.R."/>
            <person name="Palm C.J."/>
            <person name="Federspiel N.A."/>
            <person name="Kaul S."/>
            <person name="White O."/>
            <person name="Alonso J."/>
            <person name="Altafi H."/>
            <person name="Araujo R."/>
            <person name="Bowman C.L."/>
            <person name="Brooks S.Y."/>
            <person name="Buehler E."/>
            <person name="Chan A."/>
            <person name="Chao Q."/>
            <person name="Chen H."/>
            <person name="Cheuk R.F."/>
            <person name="Chin C.W."/>
            <person name="Chung M.K."/>
            <person name="Conn L."/>
            <person name="Conway A.B."/>
            <person name="Conway A.R."/>
            <person name="Creasy T.H."/>
            <person name="Dewar K."/>
            <person name="Dunn P."/>
            <person name="Etgu P."/>
            <person name="Feldblyum T.V."/>
            <person name="Feng J.-D."/>
            <person name="Fong B."/>
            <person name="Fujii C.Y."/>
            <person name="Gill J.E."/>
            <person name="Goldsmith A.D."/>
            <person name="Haas B."/>
            <person name="Hansen N.F."/>
            <person name="Hughes B."/>
            <person name="Huizar L."/>
            <person name="Hunter J.L."/>
            <person name="Jenkins J."/>
            <person name="Johnson-Hopson C."/>
            <person name="Khan S."/>
            <person name="Khaykin E."/>
            <person name="Kim C.J."/>
            <person name="Koo H.L."/>
            <person name="Kremenetskaia I."/>
            <person name="Kurtz D.B."/>
            <person name="Kwan A."/>
            <person name="Lam B."/>
            <person name="Langin-Hooper S."/>
            <person name="Lee A."/>
            <person name="Lee J.M."/>
            <person name="Lenz C.A."/>
            <person name="Li J.H."/>
            <person name="Li Y.-P."/>
            <person name="Lin X."/>
            <person name="Liu S.X."/>
            <person name="Liu Z.A."/>
            <person name="Luros J.S."/>
            <person name="Maiti R."/>
            <person name="Marziali A."/>
            <person name="Militscher J."/>
            <person name="Miranda M."/>
            <person name="Nguyen M."/>
            <person name="Nierman W.C."/>
            <person name="Osborne B.I."/>
            <person name="Pai G."/>
            <person name="Peterson J."/>
            <person name="Pham P.K."/>
            <person name="Rizzo M."/>
            <person name="Rooney T."/>
            <person name="Rowley D."/>
            <person name="Sakano H."/>
            <person name="Salzberg S.L."/>
            <person name="Schwartz J.R."/>
            <person name="Shinn P."/>
            <person name="Southwick A.M."/>
            <person name="Sun H."/>
            <person name="Tallon L.J."/>
            <person name="Tambunga G."/>
            <person name="Toriumi M.J."/>
            <person name="Town C.D."/>
            <person name="Utterback T."/>
            <person name="Van Aken S."/>
            <person name="Vaysberg M."/>
            <person name="Vysotskaia V.S."/>
            <person name="Walker M."/>
            <person name="Wu D."/>
            <person name="Yu G."/>
            <person name="Fraser C.M."/>
            <person name="Venter J.C."/>
            <person name="Davis R.W."/>
        </authorList>
    </citation>
    <scope>NUCLEOTIDE SEQUENCE [LARGE SCALE GENOMIC DNA]</scope>
    <source>
        <strain>cv. Columbia</strain>
    </source>
</reference>
<reference key="4">
    <citation type="journal article" date="2017" name="Plant J.">
        <title>Araport11: a complete reannotation of the Arabidopsis thaliana reference genome.</title>
        <authorList>
            <person name="Cheng C.Y."/>
            <person name="Krishnakumar V."/>
            <person name="Chan A.P."/>
            <person name="Thibaud-Nissen F."/>
            <person name="Schobel S."/>
            <person name="Town C.D."/>
        </authorList>
    </citation>
    <scope>GENOME REANNOTATION</scope>
    <source>
        <strain>cv. Columbia</strain>
    </source>
</reference>
<reference key="5">
    <citation type="journal article" date="2003" name="Science">
        <title>Empirical analysis of transcriptional activity in the Arabidopsis genome.</title>
        <authorList>
            <person name="Yamada K."/>
            <person name="Lim J."/>
            <person name="Dale J.M."/>
            <person name="Chen H."/>
            <person name="Shinn P."/>
            <person name="Palm C.J."/>
            <person name="Southwick A.M."/>
            <person name="Wu H.C."/>
            <person name="Kim C.J."/>
            <person name="Nguyen M."/>
            <person name="Pham P.K."/>
            <person name="Cheuk R.F."/>
            <person name="Karlin-Newmann G."/>
            <person name="Liu S.X."/>
            <person name="Lam B."/>
            <person name="Sakano H."/>
            <person name="Wu T."/>
            <person name="Yu G."/>
            <person name="Miranda M."/>
            <person name="Quach H.L."/>
            <person name="Tripp M."/>
            <person name="Chang C.H."/>
            <person name="Lee J.M."/>
            <person name="Toriumi M.J."/>
            <person name="Chan M.M."/>
            <person name="Tang C.C."/>
            <person name="Onodera C.S."/>
            <person name="Deng J.M."/>
            <person name="Akiyama K."/>
            <person name="Ansari Y."/>
            <person name="Arakawa T."/>
            <person name="Banh J."/>
            <person name="Banno F."/>
            <person name="Bowser L."/>
            <person name="Brooks S.Y."/>
            <person name="Carninci P."/>
            <person name="Chao Q."/>
            <person name="Choy N."/>
            <person name="Enju A."/>
            <person name="Goldsmith A.D."/>
            <person name="Gurjal M."/>
            <person name="Hansen N.F."/>
            <person name="Hayashizaki Y."/>
            <person name="Johnson-Hopson C."/>
            <person name="Hsuan V.W."/>
            <person name="Iida K."/>
            <person name="Karnes M."/>
            <person name="Khan S."/>
            <person name="Koesema E."/>
            <person name="Ishida J."/>
            <person name="Jiang P.X."/>
            <person name="Jones T."/>
            <person name="Kawai J."/>
            <person name="Kamiya A."/>
            <person name="Meyers C."/>
            <person name="Nakajima M."/>
            <person name="Narusaka M."/>
            <person name="Seki M."/>
            <person name="Sakurai T."/>
            <person name="Satou M."/>
            <person name="Tamse R."/>
            <person name="Vaysberg M."/>
            <person name="Wallender E.K."/>
            <person name="Wong C."/>
            <person name="Yamamura Y."/>
            <person name="Yuan S."/>
            <person name="Shinozaki K."/>
            <person name="Davis R.W."/>
            <person name="Theologis A."/>
            <person name="Ecker J.R."/>
        </authorList>
    </citation>
    <scope>NUCLEOTIDE SEQUENCE [LARGE SCALE MRNA]</scope>
    <source>
        <strain>cv. Columbia</strain>
    </source>
</reference>
<reference key="6">
    <citation type="journal article" date="1996" name="Plant J.">
        <title>Further progress towards a catalogue of all Arabidopsis genes: analysis of a set of 5000 non-redundant ESTs.</title>
        <authorList>
            <person name="Cooke R."/>
            <person name="Raynal M."/>
            <person name="Laudie M."/>
            <person name="Grellet F."/>
            <person name="Delseny M."/>
            <person name="Morris P.-C."/>
            <person name="Guerrier D."/>
            <person name="Giraudat J."/>
            <person name="Quigley F."/>
            <person name="Clabault G."/>
            <person name="Li Y.-F."/>
            <person name="Mache R."/>
            <person name="Krivitzky M."/>
            <person name="Gy I.J.-J."/>
            <person name="Kreis M."/>
            <person name="Lecharny A."/>
            <person name="Parmentier Y."/>
            <person name="Marbach J."/>
            <person name="Fleck J."/>
            <person name="Clement B."/>
            <person name="Philipps G."/>
            <person name="Herve C."/>
            <person name="Bardet C."/>
            <person name="Tremousaygue D."/>
            <person name="Lescure B."/>
            <person name="Lacomme C."/>
            <person name="Roby D."/>
            <person name="Jourjon M.-F."/>
            <person name="Chabrier P."/>
            <person name="Charpenteau J.-L."/>
            <person name="Desprez T."/>
            <person name="Amselem J."/>
            <person name="Chiapello H."/>
            <person name="Hoefte H."/>
        </authorList>
    </citation>
    <scope>NUCLEOTIDE SEQUENCE [LARGE SCALE MRNA]</scope>
    <source>
        <strain>cv. Columbia</strain>
        <tissue>Dry seed</tissue>
    </source>
</reference>
<reference key="7">
    <citation type="journal article" date="1993" name="FEBS Lett.">
        <title>A new family of basic cysteine-rich plant antifungal proteins from Brassicaceae species.</title>
        <authorList>
            <person name="Terras F.R.G."/>
            <person name="Torrekens S."/>
            <person name="van Leuven F."/>
            <person name="Osborn R.W."/>
            <person name="Vanderleyden J."/>
            <person name="Cammue B.P.A."/>
            <person name="Broekaert W.F."/>
        </authorList>
    </citation>
    <scope>PROTEIN SEQUENCE OF 30-56</scope>
    <scope>PYROGLUTAMATE FORMATION AT GLN-30</scope>
    <scope>FUNCTION</scope>
    <source>
        <tissue>Seed</tissue>
    </source>
</reference>
<reference key="8">
    <citation type="journal article" date="2001" name="Plant Mol. Biol.">
        <title>Two large Arabidopsis thaliana gene families are homologous to the Brassica gene superfamily that encodes pollen coat proteins and the male component of the self-incompatibility response.</title>
        <authorList>
            <person name="Vanoosthuyse V."/>
            <person name="Miege C."/>
            <person name="Dumas C."/>
            <person name="Cock J.M."/>
        </authorList>
    </citation>
    <scope>IDENTIFICATION</scope>
</reference>
<reference key="9">
    <citation type="journal article" date="2002" name="Planta">
        <title>Plant defensins.</title>
        <authorList>
            <person name="Thomma B.P.H.J."/>
            <person name="Cammue B.P."/>
            <person name="Thevissen K."/>
        </authorList>
    </citation>
    <scope>GENE FAMILY</scope>
    <scope>NOMENCLATURE</scope>
</reference>
<reference key="10">
    <citation type="journal article" date="2005" name="Plant Physiol.">
        <title>Genome organization of more than 300 defensin-like genes in Arabidopsis.</title>
        <authorList>
            <person name="Silverstein K.A.T."/>
            <person name="Graham M.A."/>
            <person name="Paape T.D."/>
            <person name="VandenBosch K.A."/>
        </authorList>
    </citation>
    <scope>GENE FAMILY</scope>
</reference>
<reference key="11">
    <citation type="journal article" date="2007" name="Transgenic Res.">
        <title>Use of a PTGS-MAR expression system for efficient in planta production of bioactive Arabidopsis thaliana plant defensins.</title>
        <authorList>
            <person name="Sels J."/>
            <person name="Delaure S.L."/>
            <person name="Aerts A.M."/>
            <person name="Proost P."/>
            <person name="Cammue B.P.A."/>
            <person name="De Bolle M.F.C."/>
        </authorList>
    </citation>
    <scope>FUNCTION</scope>
</reference>